<sequence length="212" mass="23864">MKKVKIALTKGRLEEKAIEIFKDIGVNVDELLNKGRKLIFHSENKEYNIEFFLVKAPDVTTYVDYGAADIGIVGKDTLMEKEKDFYEVMDLKIGKCKFAVATLPEIDIYKGYNIKKIATKYPKVARKYFRNKGIDVELIKIEGSVELAPIVGLADAIVDIVETGSTLKENGLVVVEDICNISARMIVNKTSMKTKQNEISKIIENVNRVVNN</sequence>
<comment type="function">
    <text evidence="1">Catalyzes the condensation of ATP and 5-phosphoribose 1-diphosphate to form N'-(5'-phosphoribosyl)-ATP (PR-ATP). Has a crucial role in the pathway because the rate of histidine biosynthesis seems to be controlled primarily by regulation of HisG enzymatic activity.</text>
</comment>
<comment type="catalytic activity">
    <reaction evidence="1">
        <text>1-(5-phospho-beta-D-ribosyl)-ATP + diphosphate = 5-phospho-alpha-D-ribose 1-diphosphate + ATP</text>
        <dbReference type="Rhea" id="RHEA:18473"/>
        <dbReference type="ChEBI" id="CHEBI:30616"/>
        <dbReference type="ChEBI" id="CHEBI:33019"/>
        <dbReference type="ChEBI" id="CHEBI:58017"/>
        <dbReference type="ChEBI" id="CHEBI:73183"/>
        <dbReference type="EC" id="2.4.2.17"/>
    </reaction>
</comment>
<comment type="pathway">
    <text evidence="1">Amino-acid biosynthesis; L-histidine biosynthesis; L-histidine from 5-phospho-alpha-D-ribose 1-diphosphate: step 1/9.</text>
</comment>
<comment type="subunit">
    <text evidence="1">Heteromultimer composed of HisG and HisZ subunits.</text>
</comment>
<comment type="subcellular location">
    <subcellularLocation>
        <location evidence="1">Cytoplasm</location>
    </subcellularLocation>
</comment>
<comment type="domain">
    <text>Lacks the C-terminal regulatory region which is replaced by HisZ.</text>
</comment>
<comment type="similarity">
    <text evidence="1">Belongs to the ATP phosphoribosyltransferase family. Short subfamily.</text>
</comment>
<gene>
    <name evidence="1" type="primary">hisG</name>
    <name type="ordered locus">NT01CX_1061</name>
</gene>
<dbReference type="EC" id="2.4.2.17" evidence="1"/>
<dbReference type="EMBL" id="CP000382">
    <property type="protein sequence ID" value="ABK61899.1"/>
    <property type="molecule type" value="Genomic_DNA"/>
</dbReference>
<dbReference type="RefSeq" id="WP_011721165.1">
    <property type="nucleotide sequence ID" value="NC_008593.1"/>
</dbReference>
<dbReference type="SMR" id="A0PXP3"/>
<dbReference type="STRING" id="386415.NT01CX_1061"/>
<dbReference type="KEGG" id="cno:NT01CX_1061"/>
<dbReference type="eggNOG" id="COG0040">
    <property type="taxonomic scope" value="Bacteria"/>
</dbReference>
<dbReference type="HOGENOM" id="CLU_038115_2_0_9"/>
<dbReference type="UniPathway" id="UPA00031">
    <property type="reaction ID" value="UER00006"/>
</dbReference>
<dbReference type="Proteomes" id="UP000008220">
    <property type="component" value="Chromosome"/>
</dbReference>
<dbReference type="GO" id="GO:0005737">
    <property type="term" value="C:cytoplasm"/>
    <property type="evidence" value="ECO:0007669"/>
    <property type="project" value="UniProtKB-SubCell"/>
</dbReference>
<dbReference type="GO" id="GO:0005524">
    <property type="term" value="F:ATP binding"/>
    <property type="evidence" value="ECO:0007669"/>
    <property type="project" value="UniProtKB-KW"/>
</dbReference>
<dbReference type="GO" id="GO:0003879">
    <property type="term" value="F:ATP phosphoribosyltransferase activity"/>
    <property type="evidence" value="ECO:0007669"/>
    <property type="project" value="UniProtKB-UniRule"/>
</dbReference>
<dbReference type="GO" id="GO:0000105">
    <property type="term" value="P:L-histidine biosynthetic process"/>
    <property type="evidence" value="ECO:0007669"/>
    <property type="project" value="UniProtKB-UniRule"/>
</dbReference>
<dbReference type="CDD" id="cd13595">
    <property type="entry name" value="PBP2_HisGs"/>
    <property type="match status" value="1"/>
</dbReference>
<dbReference type="FunFam" id="3.40.190.10:FF:000008">
    <property type="entry name" value="ATP phosphoribosyltransferase"/>
    <property type="match status" value="1"/>
</dbReference>
<dbReference type="FunFam" id="3.40.190.10:FF:000011">
    <property type="entry name" value="ATP phosphoribosyltransferase"/>
    <property type="match status" value="1"/>
</dbReference>
<dbReference type="Gene3D" id="3.40.190.10">
    <property type="entry name" value="Periplasmic binding protein-like II"/>
    <property type="match status" value="2"/>
</dbReference>
<dbReference type="HAMAP" id="MF_01018">
    <property type="entry name" value="HisG_Short"/>
    <property type="match status" value="1"/>
</dbReference>
<dbReference type="InterPro" id="IPR013820">
    <property type="entry name" value="ATP_PRibTrfase_cat"/>
</dbReference>
<dbReference type="InterPro" id="IPR018198">
    <property type="entry name" value="ATP_PRibTrfase_CS"/>
</dbReference>
<dbReference type="InterPro" id="IPR001348">
    <property type="entry name" value="ATP_PRibTrfase_HisG"/>
</dbReference>
<dbReference type="InterPro" id="IPR024893">
    <property type="entry name" value="ATP_PRibTrfase_HisG_short"/>
</dbReference>
<dbReference type="NCBIfam" id="TIGR00070">
    <property type="entry name" value="hisG"/>
    <property type="match status" value="1"/>
</dbReference>
<dbReference type="PANTHER" id="PTHR21403:SF8">
    <property type="entry name" value="ATP PHOSPHORIBOSYLTRANSFERASE"/>
    <property type="match status" value="1"/>
</dbReference>
<dbReference type="PANTHER" id="PTHR21403">
    <property type="entry name" value="ATP PHOSPHORIBOSYLTRANSFERASE ATP-PRTASE"/>
    <property type="match status" value="1"/>
</dbReference>
<dbReference type="Pfam" id="PF01634">
    <property type="entry name" value="HisG"/>
    <property type="match status" value="1"/>
</dbReference>
<dbReference type="SUPFAM" id="SSF53850">
    <property type="entry name" value="Periplasmic binding protein-like II"/>
    <property type="match status" value="1"/>
</dbReference>
<dbReference type="PROSITE" id="PS01316">
    <property type="entry name" value="ATP_P_PHORIBOSYLTR"/>
    <property type="match status" value="1"/>
</dbReference>
<feature type="chain" id="PRO_0000319518" description="ATP phosphoribosyltransferase">
    <location>
        <begin position="1"/>
        <end position="212"/>
    </location>
</feature>
<organism>
    <name type="scientific">Clostridium novyi (strain NT)</name>
    <dbReference type="NCBI Taxonomy" id="386415"/>
    <lineage>
        <taxon>Bacteria</taxon>
        <taxon>Bacillati</taxon>
        <taxon>Bacillota</taxon>
        <taxon>Clostridia</taxon>
        <taxon>Eubacteriales</taxon>
        <taxon>Clostridiaceae</taxon>
        <taxon>Clostridium</taxon>
    </lineage>
</organism>
<accession>A0PXP3</accession>
<reference key="1">
    <citation type="journal article" date="2006" name="Nat. Biotechnol.">
        <title>The genome and transcriptomes of the anti-tumor agent Clostridium novyi-NT.</title>
        <authorList>
            <person name="Bettegowda C."/>
            <person name="Huang X."/>
            <person name="Lin J."/>
            <person name="Cheong I."/>
            <person name="Kohli M."/>
            <person name="Szabo S.A."/>
            <person name="Zhang X."/>
            <person name="Diaz L.A. Jr."/>
            <person name="Velculescu V.E."/>
            <person name="Parmigiani G."/>
            <person name="Kinzler K.W."/>
            <person name="Vogelstein B."/>
            <person name="Zhou S."/>
        </authorList>
    </citation>
    <scope>NUCLEOTIDE SEQUENCE [LARGE SCALE GENOMIC DNA]</scope>
    <source>
        <strain>NT</strain>
    </source>
</reference>
<protein>
    <recommendedName>
        <fullName evidence="1">ATP phosphoribosyltransferase</fullName>
        <shortName evidence="1">ATP-PRT</shortName>
        <shortName evidence="1">ATP-PRTase</shortName>
        <ecNumber evidence="1">2.4.2.17</ecNumber>
    </recommendedName>
</protein>
<keyword id="KW-0028">Amino-acid biosynthesis</keyword>
<keyword id="KW-0067">ATP-binding</keyword>
<keyword id="KW-0963">Cytoplasm</keyword>
<keyword id="KW-0328">Glycosyltransferase</keyword>
<keyword id="KW-0368">Histidine biosynthesis</keyword>
<keyword id="KW-0547">Nucleotide-binding</keyword>
<keyword id="KW-1185">Reference proteome</keyword>
<keyword id="KW-0808">Transferase</keyword>
<name>HIS1_CLONN</name>
<proteinExistence type="inferred from homology"/>
<evidence type="ECO:0000255" key="1">
    <source>
        <dbReference type="HAMAP-Rule" id="MF_01018"/>
    </source>
</evidence>